<reference key="1">
    <citation type="submission" date="2009-07" db="EMBL/GenBank/DDBJ databases">
        <title>Complete sequence of Pectobacterium carotovorum subsp. carotovorum PC1.</title>
        <authorList>
            <consortium name="US DOE Joint Genome Institute"/>
            <person name="Lucas S."/>
            <person name="Copeland A."/>
            <person name="Lapidus A."/>
            <person name="Glavina del Rio T."/>
            <person name="Tice H."/>
            <person name="Bruce D."/>
            <person name="Goodwin L."/>
            <person name="Pitluck S."/>
            <person name="Munk A.C."/>
            <person name="Brettin T."/>
            <person name="Detter J.C."/>
            <person name="Han C."/>
            <person name="Tapia R."/>
            <person name="Larimer F."/>
            <person name="Land M."/>
            <person name="Hauser L."/>
            <person name="Kyrpides N."/>
            <person name="Mikhailova N."/>
            <person name="Balakrishnan V."/>
            <person name="Glasner J."/>
            <person name="Perna N.T."/>
        </authorList>
    </citation>
    <scope>NUCLEOTIDE SEQUENCE [LARGE SCALE GENOMIC DNA]</scope>
    <source>
        <strain>PC1</strain>
    </source>
</reference>
<gene>
    <name type="ordered locus">PC1_0756</name>
</gene>
<comment type="similarity">
    <text evidence="1">Belongs to the UPF0178 family.</text>
</comment>
<sequence length="150" mass="16761">MQIWVDADACPNVIKDVLFRAADRTQTQVTLVANQTIKVPPSRFIRTLRVSSGFDVADNEIVRRVEAGDLVITADIPLAAEVIEKGGAALNPRGERYTPDTIRERLNMRDFMDTMRASGIQTGGPSALSQRDRQQFANELDKWLHQAKKP</sequence>
<dbReference type="EMBL" id="CP001657">
    <property type="protein sequence ID" value="ACT11810.1"/>
    <property type="molecule type" value="Genomic_DNA"/>
</dbReference>
<dbReference type="RefSeq" id="WP_012773453.1">
    <property type="nucleotide sequence ID" value="NC_012917.1"/>
</dbReference>
<dbReference type="SMR" id="C6D9M4"/>
<dbReference type="STRING" id="561230.PC1_0756"/>
<dbReference type="KEGG" id="pct:PC1_0756"/>
<dbReference type="eggNOG" id="COG1671">
    <property type="taxonomic scope" value="Bacteria"/>
</dbReference>
<dbReference type="HOGENOM" id="CLU_106619_2_1_6"/>
<dbReference type="OrthoDB" id="9798918at2"/>
<dbReference type="Proteomes" id="UP000002736">
    <property type="component" value="Chromosome"/>
</dbReference>
<dbReference type="CDD" id="cd18720">
    <property type="entry name" value="PIN_YqxD-like"/>
    <property type="match status" value="1"/>
</dbReference>
<dbReference type="HAMAP" id="MF_00489">
    <property type="entry name" value="UPF0178"/>
    <property type="match status" value="1"/>
</dbReference>
<dbReference type="InterPro" id="IPR003791">
    <property type="entry name" value="UPF0178"/>
</dbReference>
<dbReference type="NCBIfam" id="NF001095">
    <property type="entry name" value="PRK00124.1"/>
    <property type="match status" value="1"/>
</dbReference>
<dbReference type="PANTHER" id="PTHR35146">
    <property type="entry name" value="UPF0178 PROTEIN YAII"/>
    <property type="match status" value="1"/>
</dbReference>
<dbReference type="PANTHER" id="PTHR35146:SF1">
    <property type="entry name" value="UPF0178 PROTEIN YAII"/>
    <property type="match status" value="1"/>
</dbReference>
<dbReference type="Pfam" id="PF02639">
    <property type="entry name" value="DUF188"/>
    <property type="match status" value="1"/>
</dbReference>
<evidence type="ECO:0000255" key="1">
    <source>
        <dbReference type="HAMAP-Rule" id="MF_00489"/>
    </source>
</evidence>
<name>Y756_PECCP</name>
<accession>C6D9M4</accession>
<protein>
    <recommendedName>
        <fullName evidence="1">UPF0178 protein PC1_0756</fullName>
    </recommendedName>
</protein>
<proteinExistence type="inferred from homology"/>
<feature type="chain" id="PRO_1000206457" description="UPF0178 protein PC1_0756">
    <location>
        <begin position="1"/>
        <end position="150"/>
    </location>
</feature>
<organism>
    <name type="scientific">Pectobacterium carotovorum subsp. carotovorum (strain PC1)</name>
    <dbReference type="NCBI Taxonomy" id="561230"/>
    <lineage>
        <taxon>Bacteria</taxon>
        <taxon>Pseudomonadati</taxon>
        <taxon>Pseudomonadota</taxon>
        <taxon>Gammaproteobacteria</taxon>
        <taxon>Enterobacterales</taxon>
        <taxon>Pectobacteriaceae</taxon>
        <taxon>Pectobacterium</taxon>
    </lineage>
</organism>